<keyword id="KW-0002">3D-structure</keyword>
<keyword id="KW-0112">Calmodulin-binding</keyword>
<keyword id="KW-1003">Cell membrane</keyword>
<keyword id="KW-0966">Cell projection</keyword>
<keyword id="KW-0967">Endosome</keyword>
<keyword id="KW-0325">Glycoprotein</keyword>
<keyword id="KW-0407">Ion channel</keyword>
<keyword id="KW-0406">Ion transport</keyword>
<keyword id="KW-0446">Lipid-binding</keyword>
<keyword id="KW-0472">Membrane</keyword>
<keyword id="KW-0539">Nucleus</keyword>
<keyword id="KW-0597">Phosphoprotein</keyword>
<keyword id="KW-0628">Postsynaptic cell membrane</keyword>
<keyword id="KW-0630">Potassium</keyword>
<keyword id="KW-0631">Potassium channel</keyword>
<keyword id="KW-0633">Potassium transport</keyword>
<keyword id="KW-1185">Reference proteome</keyword>
<keyword id="KW-0770">Synapse</keyword>
<keyword id="KW-0812">Transmembrane</keyword>
<keyword id="KW-1133">Transmembrane helix</keyword>
<keyword id="KW-0813">Transport</keyword>
<keyword id="KW-0851">Voltage-gated channel</keyword>
<reference key="1">
    <citation type="journal article" date="1994" name="Proc. Natl. Acad. Sci. U.S.A.">
        <title>A family of potassium channel genes related to eag in Drosophila and mammals.</title>
        <authorList>
            <person name="Warmke J.W."/>
            <person name="Ganetzky B."/>
        </authorList>
    </citation>
    <scope>NUCLEOTIDE SEQUENCE [MRNA]</scope>
    <source>
        <tissue>Brain</tissue>
    </source>
</reference>
<reference key="2">
    <citation type="journal article" date="2005" name="Science">
        <title>The transcriptional landscape of the mammalian genome.</title>
        <authorList>
            <person name="Carninci P."/>
            <person name="Kasukawa T."/>
            <person name="Katayama S."/>
            <person name="Gough J."/>
            <person name="Frith M.C."/>
            <person name="Maeda N."/>
            <person name="Oyama R."/>
            <person name="Ravasi T."/>
            <person name="Lenhard B."/>
            <person name="Wells C."/>
            <person name="Kodzius R."/>
            <person name="Shimokawa K."/>
            <person name="Bajic V.B."/>
            <person name="Brenner S.E."/>
            <person name="Batalov S."/>
            <person name="Forrest A.R."/>
            <person name="Zavolan M."/>
            <person name="Davis M.J."/>
            <person name="Wilming L.G."/>
            <person name="Aidinis V."/>
            <person name="Allen J.E."/>
            <person name="Ambesi-Impiombato A."/>
            <person name="Apweiler R."/>
            <person name="Aturaliya R.N."/>
            <person name="Bailey T.L."/>
            <person name="Bansal M."/>
            <person name="Baxter L."/>
            <person name="Beisel K.W."/>
            <person name="Bersano T."/>
            <person name="Bono H."/>
            <person name="Chalk A.M."/>
            <person name="Chiu K.P."/>
            <person name="Choudhary V."/>
            <person name="Christoffels A."/>
            <person name="Clutterbuck D.R."/>
            <person name="Crowe M.L."/>
            <person name="Dalla E."/>
            <person name="Dalrymple B.P."/>
            <person name="de Bono B."/>
            <person name="Della Gatta G."/>
            <person name="di Bernardo D."/>
            <person name="Down T."/>
            <person name="Engstrom P."/>
            <person name="Fagiolini M."/>
            <person name="Faulkner G."/>
            <person name="Fletcher C.F."/>
            <person name="Fukushima T."/>
            <person name="Furuno M."/>
            <person name="Futaki S."/>
            <person name="Gariboldi M."/>
            <person name="Georgii-Hemming P."/>
            <person name="Gingeras T.R."/>
            <person name="Gojobori T."/>
            <person name="Green R.E."/>
            <person name="Gustincich S."/>
            <person name="Harbers M."/>
            <person name="Hayashi Y."/>
            <person name="Hensch T.K."/>
            <person name="Hirokawa N."/>
            <person name="Hill D."/>
            <person name="Huminiecki L."/>
            <person name="Iacono M."/>
            <person name="Ikeo K."/>
            <person name="Iwama A."/>
            <person name="Ishikawa T."/>
            <person name="Jakt M."/>
            <person name="Kanapin A."/>
            <person name="Katoh M."/>
            <person name="Kawasawa Y."/>
            <person name="Kelso J."/>
            <person name="Kitamura H."/>
            <person name="Kitano H."/>
            <person name="Kollias G."/>
            <person name="Krishnan S.P."/>
            <person name="Kruger A."/>
            <person name="Kummerfeld S.K."/>
            <person name="Kurochkin I.V."/>
            <person name="Lareau L.F."/>
            <person name="Lazarevic D."/>
            <person name="Lipovich L."/>
            <person name="Liu J."/>
            <person name="Liuni S."/>
            <person name="McWilliam S."/>
            <person name="Madan Babu M."/>
            <person name="Madera M."/>
            <person name="Marchionni L."/>
            <person name="Matsuda H."/>
            <person name="Matsuzawa S."/>
            <person name="Miki H."/>
            <person name="Mignone F."/>
            <person name="Miyake S."/>
            <person name="Morris K."/>
            <person name="Mottagui-Tabar S."/>
            <person name="Mulder N."/>
            <person name="Nakano N."/>
            <person name="Nakauchi H."/>
            <person name="Ng P."/>
            <person name="Nilsson R."/>
            <person name="Nishiguchi S."/>
            <person name="Nishikawa S."/>
            <person name="Nori F."/>
            <person name="Ohara O."/>
            <person name="Okazaki Y."/>
            <person name="Orlando V."/>
            <person name="Pang K.C."/>
            <person name="Pavan W.J."/>
            <person name="Pavesi G."/>
            <person name="Pesole G."/>
            <person name="Petrovsky N."/>
            <person name="Piazza S."/>
            <person name="Reed J."/>
            <person name="Reid J.F."/>
            <person name="Ring B.Z."/>
            <person name="Ringwald M."/>
            <person name="Rost B."/>
            <person name="Ruan Y."/>
            <person name="Salzberg S.L."/>
            <person name="Sandelin A."/>
            <person name="Schneider C."/>
            <person name="Schoenbach C."/>
            <person name="Sekiguchi K."/>
            <person name="Semple C.A."/>
            <person name="Seno S."/>
            <person name="Sessa L."/>
            <person name="Sheng Y."/>
            <person name="Shibata Y."/>
            <person name="Shimada H."/>
            <person name="Shimada K."/>
            <person name="Silva D."/>
            <person name="Sinclair B."/>
            <person name="Sperling S."/>
            <person name="Stupka E."/>
            <person name="Sugiura K."/>
            <person name="Sultana R."/>
            <person name="Takenaka Y."/>
            <person name="Taki K."/>
            <person name="Tammoja K."/>
            <person name="Tan S.L."/>
            <person name="Tang S."/>
            <person name="Taylor M.S."/>
            <person name="Tegner J."/>
            <person name="Teichmann S.A."/>
            <person name="Ueda H.R."/>
            <person name="van Nimwegen E."/>
            <person name="Verardo R."/>
            <person name="Wei C.L."/>
            <person name="Yagi K."/>
            <person name="Yamanishi H."/>
            <person name="Zabarovsky E."/>
            <person name="Zhu S."/>
            <person name="Zimmer A."/>
            <person name="Hide W."/>
            <person name="Bult C."/>
            <person name="Grimmond S.M."/>
            <person name="Teasdale R.D."/>
            <person name="Liu E.T."/>
            <person name="Brusic V."/>
            <person name="Quackenbush J."/>
            <person name="Wahlestedt C."/>
            <person name="Mattick J.S."/>
            <person name="Hume D.A."/>
            <person name="Kai C."/>
            <person name="Sasaki D."/>
            <person name="Tomaru Y."/>
            <person name="Fukuda S."/>
            <person name="Kanamori-Katayama M."/>
            <person name="Suzuki M."/>
            <person name="Aoki J."/>
            <person name="Arakawa T."/>
            <person name="Iida J."/>
            <person name="Imamura K."/>
            <person name="Itoh M."/>
            <person name="Kato T."/>
            <person name="Kawaji H."/>
            <person name="Kawagashira N."/>
            <person name="Kawashima T."/>
            <person name="Kojima M."/>
            <person name="Kondo S."/>
            <person name="Konno H."/>
            <person name="Nakano K."/>
            <person name="Ninomiya N."/>
            <person name="Nishio T."/>
            <person name="Okada M."/>
            <person name="Plessy C."/>
            <person name="Shibata K."/>
            <person name="Shiraki T."/>
            <person name="Suzuki S."/>
            <person name="Tagami M."/>
            <person name="Waki K."/>
            <person name="Watahiki A."/>
            <person name="Okamura-Oho Y."/>
            <person name="Suzuki H."/>
            <person name="Kawai J."/>
            <person name="Hayashizaki Y."/>
        </authorList>
    </citation>
    <scope>NUCLEOTIDE SEQUENCE [LARGE SCALE MRNA]</scope>
    <source>
        <strain evidence="20">C57BL/6J</strain>
        <tissue evidence="20">Corpora quadrigemina</tissue>
    </source>
</reference>
<reference key="3">
    <citation type="submission" date="2005-09" db="EMBL/GenBank/DDBJ databases">
        <authorList>
            <person name="Mural R.J."/>
            <person name="Adams M.D."/>
            <person name="Myers E.W."/>
            <person name="Smith H.O."/>
            <person name="Venter J.C."/>
        </authorList>
    </citation>
    <scope>NUCLEOTIDE SEQUENCE [LARGE SCALE GENOMIC DNA]</scope>
</reference>
<reference key="4">
    <citation type="journal article" date="2004" name="Genome Res.">
        <title>The status, quality, and expansion of the NIH full-length cDNA project: the Mammalian Gene Collection (MGC).</title>
        <authorList>
            <consortium name="The MGC Project Team"/>
        </authorList>
    </citation>
    <scope>NUCLEOTIDE SEQUENCE [LARGE SCALE MRNA]</scope>
</reference>
<reference key="5">
    <citation type="journal article" date="2009" name="J. Biol. Chem.">
        <title>Absence of direct cyclic nucleotide modulation of mEAG1 and hERG1 channels revealed with fluorescence and electrophysiological methods.</title>
        <authorList>
            <person name="Brelidze T.I."/>
            <person name="Carlson A.E."/>
            <person name="Zagotta W.N."/>
        </authorList>
    </citation>
    <scope>FUNCTION</scope>
    <scope>TRANSPORTER ACTIVITY</scope>
    <scope>ACTIVITY REGULATION</scope>
    <scope>LACK OF CYCLIC NUCLEOTIDE BINDING</scope>
    <scope>SUBCELLULAR LOCATION</scope>
    <scope>DOMAIN</scope>
</reference>
<reference key="6">
    <citation type="journal article" date="2010" name="Cell">
        <title>A tissue-specific atlas of mouse protein phosphorylation and expression.</title>
        <authorList>
            <person name="Huttlin E.L."/>
            <person name="Jedrychowski M.P."/>
            <person name="Elias J.E."/>
            <person name="Goswami T."/>
            <person name="Rad R."/>
            <person name="Beausoleil S.A."/>
            <person name="Villen J."/>
            <person name="Haas W."/>
            <person name="Sowa M.E."/>
            <person name="Gygi S.P."/>
        </authorList>
    </citation>
    <scope>PHOSPHORYLATION [LARGE SCALE ANALYSIS] AT SER-974; SER-978 AND SER-981</scope>
    <scope>IDENTIFICATION BY MASS SPECTROMETRY [LARGE SCALE ANALYSIS]</scope>
    <source>
        <tissue>Brain</tissue>
    </source>
</reference>
<reference key="7">
    <citation type="journal article" date="2012" name="FEBS Lett.">
        <title>Physical and functional interaction of KV10.1 with Rabaptin-5 impacts ion channel trafficking.</title>
        <authorList>
            <person name="Ninkovic M."/>
            <person name="Mitkovski M."/>
            <person name="Kohl T."/>
            <person name="Stuhmer W."/>
            <person name="Pardo L.A."/>
        </authorList>
    </citation>
    <scope>INTERACTION WITH RABEP1</scope>
</reference>
<reference key="8">
    <citation type="journal article" date="2013" name="Hum. Mol. Genet.">
        <title>Behavioural and functional characterization of Kv10.1 (Eag1) knockout mice.</title>
        <authorList>
            <person name="Ufartes R."/>
            <person name="Schneider T."/>
            <person name="Mortensen L.S."/>
            <person name="de Juan Romero C."/>
            <person name="Hentrich K."/>
            <person name="Knoetgen H."/>
            <person name="Beilinson V."/>
            <person name="Moebius W."/>
            <person name="Tarabykin V."/>
            <person name="Alves F."/>
            <person name="Pardo L.A."/>
            <person name="Rawlins J.N."/>
            <person name="Stuehmer W."/>
        </authorList>
    </citation>
    <scope>DISRUPTION PHENOTYPE</scope>
    <scope>TISSUE SPECIFICITY</scope>
</reference>
<reference key="9">
    <citation type="journal article" date="2015" name="J. Physiol. (Lond.)">
        <title>KV 10.1 opposes activity-dependent increase in Ca2+ influx into the presynaptic terminal of the parallel fibre-Purkinje cell synapse.</title>
        <authorList>
            <person name="Mortensen L.S."/>
            <person name="Schmidt H."/>
            <person name="Farsi Z."/>
            <person name="Barrantes-Freer A."/>
            <person name="Rubio M.E."/>
            <person name="Ufartes R."/>
            <person name="Eilers J."/>
            <person name="Sakaba T."/>
            <person name="Stuehmer W."/>
            <person name="Pardo L.A."/>
        </authorList>
    </citation>
    <scope>SUBCELLULAR LOCATION</scope>
    <scope>TISSUE SPECIFICITY</scope>
</reference>
<reference evidence="22" key="10">
    <citation type="journal article" date="2012" name="J. Mol. Biol.">
        <title>Structural, biochemical, and functional characterization of the cyclic nucleotide binding homology domain from the mouse EAG1 potassium channel.</title>
        <authorList>
            <person name="Marques-Carvalho M.J."/>
            <person name="Sahoo N."/>
            <person name="Muskett F.W."/>
            <person name="Vieira-Pires R.S."/>
            <person name="Gabant G."/>
            <person name="Cadene M."/>
            <person name="Schonherr R."/>
            <person name="Morais-Cabral J.H."/>
        </authorList>
    </citation>
    <scope>X-RAY CRYSTALLOGRAPHY (2.20 ANGSTROMS) OF 552-707</scope>
    <scope>DOMAIN</scope>
    <scope>CALMODULIN-BINDING REGION</scope>
    <scope>MUTAGENESIS OF VAL-628; 697-LEU--TYR-699; TYR-699; 699-TYR--LEU-701 AND 705-ILE--PHE-707</scope>
</reference>
<reference evidence="24" key="11">
    <citation type="journal article" date="2013" name="Nature">
        <title>The structural mechanism of KCNH-channel regulation by the eag domain.</title>
        <authorList>
            <person name="Haitin Y."/>
            <person name="Carlson A.E."/>
            <person name="Zagotta W.N."/>
        </authorList>
    </citation>
    <scope>X-RAY CRYSTALLOGRAPHY (2.00 ANGSTROMS) OF 6-136 AND 552-724</scope>
    <scope>FUNCTION</scope>
    <scope>TRANSPORTER ACTIVITY</scope>
    <scope>SUBCELLULAR LOCATION</scope>
    <scope>DOMAIN</scope>
    <scope>MUTAGENESIS OF 7-ARG-ARG-8; ARG-57; GLU-627 AND ASP-642</scope>
</reference>
<reference evidence="23" key="12">
    <citation type="journal article" date="2013" name="PLoS ONE">
        <title>Structural properties of PAS domains from the KCNH potassium channels.</title>
        <authorList>
            <person name="Adaixo R."/>
            <person name="Harley C.A."/>
            <person name="Castro-Rodrigues A.F."/>
            <person name="Morais-Cabral J.H."/>
        </authorList>
    </citation>
    <scope>X-RAY CRYSTALLOGRAPHY (1.85 ANGSTROMS) OF 28-137</scope>
    <scope>SUBUNIT</scope>
</reference>
<reference evidence="25" key="13">
    <citation type="journal article" date="2016" name="Structure">
        <title>Molecular insights into the mechanism of calmodulin inhibition of the EAG1 potassium channel.</title>
        <authorList>
            <person name="Marques-Carvalho M.J."/>
            <person name="Oppermann J."/>
            <person name="Munoz E."/>
            <person name="Fernandes A.S."/>
            <person name="Gabant G."/>
            <person name="Cadene M."/>
            <person name="Heinemann S.H."/>
            <person name="Schoenherr R."/>
            <person name="Morais-Cabral J.H."/>
        </authorList>
    </citation>
    <scope>X-RAY CRYSTALLOGRAPHY (2.85 ANGSTROMS) OF 727-743 IN COMPLEX WITH CALM</scope>
    <scope>MUTAGENESIS OF VAL-737; LEU-740 AND PHE-741</scope>
    <scope>INTERACTION WITH CALM</scope>
</reference>
<gene>
    <name evidence="21" type="primary">Kcnh1</name>
    <name evidence="15" type="synonym">Eag1</name>
</gene>
<comment type="function">
    <text evidence="1 7 12">Pore-forming (alpha) subunit of a voltage-gated delayed rectifier potassium channel that mediates outward-rectifying potassium currents which, on depolarization, reaches a steady-state level and do not inactivate (PubMed:19671703, PubMed:23975098). The activation kinetics depend on the prepulse potential and external divalent cation concentration. With negative prepulses, the current activation is delayed and slowed down several fold, whereas more positive prepulses speed up activation. The time course of activation is biphasic with a fast and a slowly activating current component. Activates at more positive membrane potentials and exhibit a steeper activation curve (By similarity). Channel properties are modulated by subunit assembly. Mediates IK(NI) current in myoblasts. Involved in the regulation of cell proliferation and differentiation, in particular adipogenic and osteogenic differentiation in bone marrow-derived mesenchymal stem cells (MSCs) (By similarity).</text>
</comment>
<comment type="catalytic activity">
    <reaction evidence="7 12">
        <text>K(+)(in) = K(+)(out)</text>
        <dbReference type="Rhea" id="RHEA:29463"/>
        <dbReference type="ChEBI" id="CHEBI:29103"/>
    </reaction>
</comment>
<comment type="activity regulation">
    <text evidence="1 7">Channel activity is inhibited by interaction with Ca(2+)-bound calmodulin. Interaction of a single pore-forming alpha subunit with a calmodulin chain is sufficient to promote channel closure (By similarity). Channel activity is not regulated by cyclic nucleotides (PubMed:19671703). Channel activity is inhibited by binding intracellular phosphatidylinositol-3,5-bisphosphate and phosphatidylinositol-4,5-bisphosphate (PIP2), but is not inhibited by phosphatidylinositol 4-phosphate (By similarity).</text>
</comment>
<comment type="subunit">
    <text evidence="1 9 11 12 14">Homomultimer (By similarity). The potassium channel is composed of a homo- or heterotetrameric complex of pore-forming alpha subunits that can associate with modulating beta subunits (PubMed:23555008, PubMed:23975098). Heteromultimer with KCNH5/EAG2 (By similarity). Interacts with ALG10B (By similarity). Interacts with RABEP1 (PubMed:22841712). Interacts (via C-terminus) with CTTN. Interacts (via C-terminal cytoplasmic region) with Ca(2+)-bound calmodulin (PubMed:27618660).</text>
</comment>
<comment type="subcellular location">
    <subcellularLocation>
        <location evidence="7 12">Cell membrane</location>
        <topology evidence="1">Multi-pass membrane protein</topology>
    </subcellularLocation>
    <subcellularLocation>
        <location evidence="1">Nucleus inner membrane</location>
        <topology evidence="1">Multi-pass membrane protein</topology>
    </subcellularLocation>
    <subcellularLocation>
        <location evidence="2">Cell projection</location>
        <location evidence="2">Dendrite</location>
    </subcellularLocation>
    <subcellularLocation>
        <location evidence="2">Cell projection</location>
        <location evidence="2">Axon</location>
    </subcellularLocation>
    <subcellularLocation>
        <location evidence="13">Presynaptic cell membrane</location>
    </subcellularLocation>
    <subcellularLocation>
        <location evidence="2">Perikaryon</location>
    </subcellularLocation>
    <subcellularLocation>
        <location evidence="2">Postsynaptic density membrane</location>
    </subcellularLocation>
    <subcellularLocation>
        <location evidence="1">Early endosome membrane</location>
    </subcellularLocation>
    <text evidence="1">Perinuclear KCNH1 is located to NPC-free islands.</text>
</comment>
<comment type="tissue specificity">
    <text evidence="10 13">Detected in brain (at protein level) (PubMed:23424202, PubMed:25556795). Highly expressed in olfactory bulb. Detected in brain cortex, hippocampus, brain stem, striatum, thalamus, hypothalamus and spinal cord (PubMed:23424202).</text>
</comment>
<comment type="domain">
    <text evidence="2">The segment S4 is probably the voltage-sensor and is characterized by a series of positively charged amino acids at every third position. Conformational changes of voltage-sensor are driven by an electric field generated by a potassium gradient across the membrane.</text>
</comment>
<comment type="domain">
    <text evidence="12 18">The C-terminal region interacts with the cyclic nucleotide-binding domain and contributes to regulate channel gating.</text>
</comment>
<comment type="domain">
    <text evidence="2 12">The PAS and PAC domain interact with the cyclic nucleotide-binding domain and contribute to the regulation of channel gating (PubMed:23975098). Calmodulin binding clamps together the PAS and PAC domain with the cyclic nucleotide-binding domain from a neighboring subunit and causes a conformation change that leads to channel closure.</text>
</comment>
<comment type="domain">
    <text evidence="7 8 12">The cyclic nucleotide-binding domain lacks residues that are essential for nucleotide-binding and cannot bind cyclic nucleotides (PubMed:19671703). Instead, residues from the C-terminal domain (the so-called intrinsic ligand) bind in the cavity that would be expected to bind cyclic nucleotides. Interaction with the C-terminal region hinders interaction with CALM and reduces the affinity for CALM.</text>
</comment>
<comment type="domain">
    <text evidence="2">The PAS and the cyclic nucleotide-binding domain (CNBHD) interact with the transmembrane voltage sensors (VS) that modulate voltage-dependent gating and provide evidence that VS movement destabilizes these interactions to promote channel opening.</text>
</comment>
<comment type="PTM">
    <text evidence="1">Channel activity is regulated via tyrosine phosphorylation/dephosphorylation by SRC and PTPN6.</text>
</comment>
<comment type="disruption phenotype">
    <text evidence="10">No visible phenotype. Mice are viable and fertile, and have normal brain morphology. Likewise, there is no change in the electrophysiological properties of cerebellar Purkinje cells and in the shape and frequency of action potentials.</text>
</comment>
<comment type="similarity">
    <text evidence="17">Belongs to the potassium channel family. H (Eag) (TC 1.A.1.20) subfamily. Kv10.1/KCNH1 sub-subfamily.</text>
</comment>
<protein>
    <recommendedName>
        <fullName evidence="17">Voltage-gated delayed rectifier potassium channel KCNH1</fullName>
    </recommendedName>
    <alternativeName>
        <fullName evidence="1">Ether-a-go-go potassium channel 1</fullName>
        <shortName evidence="1">EAG channel 1</shortName>
        <shortName evidence="16">m-eag</shortName>
        <shortName evidence="15">mEAG1</shortName>
    </alternativeName>
    <alternativeName>
        <fullName>Potassium voltage-gated channel subfamily H member 1</fullName>
    </alternativeName>
    <alternativeName>
        <fullName evidence="19">Voltage-gated potassium channel subunit Kv10.1</fullName>
    </alternativeName>
</protein>
<proteinExistence type="evidence at protein level"/>
<dbReference type="EMBL" id="U04294">
    <property type="protein sequence ID" value="AAA62474.1"/>
    <property type="molecule type" value="mRNA"/>
</dbReference>
<dbReference type="EMBL" id="AK140193">
    <property type="protein sequence ID" value="BAE24272.1"/>
    <property type="molecule type" value="mRNA"/>
</dbReference>
<dbReference type="EMBL" id="CH466555">
    <property type="protein sequence ID" value="EDL12967.1"/>
    <property type="molecule type" value="Genomic_DNA"/>
</dbReference>
<dbReference type="EMBL" id="BC109013">
    <property type="protein sequence ID" value="AAI09014.1"/>
    <property type="molecule type" value="mRNA"/>
</dbReference>
<dbReference type="CCDS" id="CCDS15627.1"/>
<dbReference type="PIR" id="I48912">
    <property type="entry name" value="I48912"/>
</dbReference>
<dbReference type="RefSeq" id="NP_034730.1">
    <property type="nucleotide sequence ID" value="NM_010600.3"/>
</dbReference>
<dbReference type="PDB" id="4F8A">
    <property type="method" value="X-ray"/>
    <property type="resolution" value="2.20 A"/>
    <property type="chains" value="A=552-707"/>
</dbReference>
<dbReference type="PDB" id="4HOI">
    <property type="method" value="X-ray"/>
    <property type="resolution" value="1.85 A"/>
    <property type="chains" value="A/B/C/D=28-137"/>
</dbReference>
<dbReference type="PDB" id="4LLO">
    <property type="method" value="X-ray"/>
    <property type="resolution" value="2.00 A"/>
    <property type="chains" value="A/C/E/G=552-724, B/D/F/H=6-136"/>
</dbReference>
<dbReference type="PDB" id="5HIT">
    <property type="method" value="X-ray"/>
    <property type="resolution" value="2.85 A"/>
    <property type="chains" value="B=727-743"/>
</dbReference>
<dbReference type="PDBsum" id="4F8A"/>
<dbReference type="PDBsum" id="4HOI"/>
<dbReference type="PDBsum" id="4LLO"/>
<dbReference type="PDBsum" id="5HIT"/>
<dbReference type="SMR" id="Q60603"/>
<dbReference type="BioGRID" id="200892">
    <property type="interactions" value="4"/>
</dbReference>
<dbReference type="FunCoup" id="Q60603">
    <property type="interactions" value="631"/>
</dbReference>
<dbReference type="IntAct" id="Q60603">
    <property type="interactions" value="1"/>
</dbReference>
<dbReference type="MINT" id="Q60603"/>
<dbReference type="STRING" id="10090.ENSMUSP00000077563"/>
<dbReference type="GlyCosmos" id="Q60603">
    <property type="glycosylation" value="2 sites, No reported glycans"/>
</dbReference>
<dbReference type="GlyGen" id="Q60603">
    <property type="glycosylation" value="5 sites, 1 N-linked glycan (1 site), 1 O-linked glycan (3 sites)"/>
</dbReference>
<dbReference type="iPTMnet" id="Q60603"/>
<dbReference type="PhosphoSitePlus" id="Q60603"/>
<dbReference type="jPOST" id="Q60603"/>
<dbReference type="PaxDb" id="10090-ENSMUSP00000077563"/>
<dbReference type="ProteomicsDB" id="269200"/>
<dbReference type="DNASU" id="16510"/>
<dbReference type="GeneID" id="16510"/>
<dbReference type="KEGG" id="mmu:16510"/>
<dbReference type="UCSC" id="uc007edo.2">
    <property type="organism name" value="mouse"/>
</dbReference>
<dbReference type="AGR" id="MGI:1341721"/>
<dbReference type="CTD" id="3756"/>
<dbReference type="MGI" id="MGI:1341721">
    <property type="gene designation" value="Kcnh1"/>
</dbReference>
<dbReference type="eggNOG" id="KOG0501">
    <property type="taxonomic scope" value="Eukaryota"/>
</dbReference>
<dbReference type="InParanoid" id="Q60603"/>
<dbReference type="OrthoDB" id="447251at2759"/>
<dbReference type="PhylomeDB" id="Q60603"/>
<dbReference type="TreeFam" id="TF313130"/>
<dbReference type="Reactome" id="R-MMU-1296072">
    <property type="pathway name" value="Voltage gated Potassium channels"/>
</dbReference>
<dbReference type="BioGRID-ORCS" id="16510">
    <property type="hits" value="4 hits in 76 CRISPR screens"/>
</dbReference>
<dbReference type="ChiTaRS" id="Kcnh1">
    <property type="organism name" value="mouse"/>
</dbReference>
<dbReference type="EvolutionaryTrace" id="Q60603"/>
<dbReference type="PRO" id="PR:Q60603"/>
<dbReference type="Proteomes" id="UP000000589">
    <property type="component" value="Unplaced"/>
</dbReference>
<dbReference type="RNAct" id="Q60603">
    <property type="molecule type" value="protein"/>
</dbReference>
<dbReference type="GO" id="GO:0030424">
    <property type="term" value="C:axon"/>
    <property type="evidence" value="ECO:0007669"/>
    <property type="project" value="UniProtKB-SubCell"/>
</dbReference>
<dbReference type="GO" id="GO:0030425">
    <property type="term" value="C:dendrite"/>
    <property type="evidence" value="ECO:0007669"/>
    <property type="project" value="UniProtKB-SubCell"/>
</dbReference>
<dbReference type="GO" id="GO:0031901">
    <property type="term" value="C:early endosome membrane"/>
    <property type="evidence" value="ECO:0000250"/>
    <property type="project" value="UniProtKB"/>
</dbReference>
<dbReference type="GO" id="GO:0005637">
    <property type="term" value="C:nuclear inner membrane"/>
    <property type="evidence" value="ECO:0007669"/>
    <property type="project" value="UniProtKB-SubCell"/>
</dbReference>
<dbReference type="GO" id="GO:0098688">
    <property type="term" value="C:parallel fiber to Purkinje cell synapse"/>
    <property type="evidence" value="ECO:0000314"/>
    <property type="project" value="SynGO"/>
</dbReference>
<dbReference type="GO" id="GO:0043204">
    <property type="term" value="C:perikaryon"/>
    <property type="evidence" value="ECO:0007669"/>
    <property type="project" value="UniProtKB-SubCell"/>
</dbReference>
<dbReference type="GO" id="GO:0005886">
    <property type="term" value="C:plasma membrane"/>
    <property type="evidence" value="ECO:0000314"/>
    <property type="project" value="UniProtKB"/>
</dbReference>
<dbReference type="GO" id="GO:0098839">
    <property type="term" value="C:postsynaptic density membrane"/>
    <property type="evidence" value="ECO:0007669"/>
    <property type="project" value="UniProtKB-SubCell"/>
</dbReference>
<dbReference type="GO" id="GO:0042734">
    <property type="term" value="C:presynaptic membrane"/>
    <property type="evidence" value="ECO:0007669"/>
    <property type="project" value="UniProtKB-SubCell"/>
</dbReference>
<dbReference type="GO" id="GO:0008076">
    <property type="term" value="C:voltage-gated potassium channel complex"/>
    <property type="evidence" value="ECO:0000250"/>
    <property type="project" value="UniProtKB"/>
</dbReference>
<dbReference type="GO" id="GO:0005516">
    <property type="term" value="F:calmodulin binding"/>
    <property type="evidence" value="ECO:0007669"/>
    <property type="project" value="UniProtKB-KW"/>
</dbReference>
<dbReference type="GO" id="GO:0005251">
    <property type="term" value="F:delayed rectifier potassium channel activity"/>
    <property type="evidence" value="ECO:0000314"/>
    <property type="project" value="UniProtKB"/>
</dbReference>
<dbReference type="GO" id="GO:1902936">
    <property type="term" value="F:phosphatidylinositol bisphosphate binding"/>
    <property type="evidence" value="ECO:0000250"/>
    <property type="project" value="UniProtKB"/>
</dbReference>
<dbReference type="GO" id="GO:0099508">
    <property type="term" value="F:voltage-gated monoatomic ion channel activity involved in regulation of presynaptic membrane potential"/>
    <property type="evidence" value="ECO:0000314"/>
    <property type="project" value="SynGO"/>
</dbReference>
<dbReference type="GO" id="GO:0071277">
    <property type="term" value="P:cellular response to calcium ion"/>
    <property type="evidence" value="ECO:0000250"/>
    <property type="project" value="UniProtKB"/>
</dbReference>
<dbReference type="GO" id="GO:0071805">
    <property type="term" value="P:potassium ion transmembrane transport"/>
    <property type="evidence" value="ECO:0000314"/>
    <property type="project" value="UniProtKB"/>
</dbReference>
<dbReference type="GO" id="GO:0042127">
    <property type="term" value="P:regulation of cell population proliferation"/>
    <property type="evidence" value="ECO:0000250"/>
    <property type="project" value="UniProtKB"/>
</dbReference>
<dbReference type="GO" id="GO:0099509">
    <property type="term" value="P:regulation of presynaptic cytosolic calcium ion concentration"/>
    <property type="evidence" value="ECO:0000314"/>
    <property type="project" value="SynGO"/>
</dbReference>
<dbReference type="GO" id="GO:2000300">
    <property type="term" value="P:regulation of synaptic vesicle exocytosis"/>
    <property type="evidence" value="ECO:0000314"/>
    <property type="project" value="SynGO"/>
</dbReference>
<dbReference type="CDD" id="cd00038">
    <property type="entry name" value="CAP_ED"/>
    <property type="match status" value="1"/>
</dbReference>
<dbReference type="CDD" id="cd00130">
    <property type="entry name" value="PAS"/>
    <property type="match status" value="1"/>
</dbReference>
<dbReference type="FunFam" id="1.10.1200.260:FF:000003">
    <property type="entry name" value="Potassium voltage-gated channel subfamily H member 1"/>
    <property type="match status" value="1"/>
</dbReference>
<dbReference type="FunFam" id="2.60.120.10:FF:000009">
    <property type="entry name" value="Potassium voltage-gated channel subfamily H member 1"/>
    <property type="match status" value="1"/>
</dbReference>
<dbReference type="FunFam" id="3.30.450.20:FF:000009">
    <property type="entry name" value="Potassium voltage-gated channel subfamily H member 1"/>
    <property type="match status" value="1"/>
</dbReference>
<dbReference type="FunFam" id="1.10.287.70:FF:000035">
    <property type="entry name" value="Potassium voltage-gated channel, subfamily H (Eag-related), member 1"/>
    <property type="match status" value="1"/>
</dbReference>
<dbReference type="Gene3D" id="1.10.1200.260">
    <property type="match status" value="1"/>
</dbReference>
<dbReference type="Gene3D" id="1.10.287.70">
    <property type="match status" value="1"/>
</dbReference>
<dbReference type="Gene3D" id="2.60.120.10">
    <property type="entry name" value="Jelly Rolls"/>
    <property type="match status" value="1"/>
</dbReference>
<dbReference type="Gene3D" id="3.30.450.20">
    <property type="entry name" value="PAS domain"/>
    <property type="match status" value="1"/>
</dbReference>
<dbReference type="InterPro" id="IPR000595">
    <property type="entry name" value="cNMP-bd_dom"/>
</dbReference>
<dbReference type="InterPro" id="IPR018490">
    <property type="entry name" value="cNMP-bd_dom_sf"/>
</dbReference>
<dbReference type="InterPro" id="IPR005821">
    <property type="entry name" value="Ion_trans_dom"/>
</dbReference>
<dbReference type="InterPro" id="IPR003949">
    <property type="entry name" value="K_chnl_volt-dep_EAG"/>
</dbReference>
<dbReference type="InterPro" id="IPR003938">
    <property type="entry name" value="K_chnl_volt-dep_EAG/ELK/ERG"/>
</dbReference>
<dbReference type="InterPro" id="IPR050818">
    <property type="entry name" value="KCNH_animal-type"/>
</dbReference>
<dbReference type="InterPro" id="IPR001610">
    <property type="entry name" value="PAC"/>
</dbReference>
<dbReference type="InterPro" id="IPR000014">
    <property type="entry name" value="PAS"/>
</dbReference>
<dbReference type="InterPro" id="IPR000700">
    <property type="entry name" value="PAS-assoc_C"/>
</dbReference>
<dbReference type="InterPro" id="IPR035965">
    <property type="entry name" value="PAS-like_dom_sf"/>
</dbReference>
<dbReference type="InterPro" id="IPR014710">
    <property type="entry name" value="RmlC-like_jellyroll"/>
</dbReference>
<dbReference type="NCBIfam" id="TIGR00229">
    <property type="entry name" value="sensory_box"/>
    <property type="match status" value="1"/>
</dbReference>
<dbReference type="PANTHER" id="PTHR10217:SF530">
    <property type="entry name" value="POTASSIUM VOLTAGE-GATED CHANNEL SUBFAMILY H MEMBER 1"/>
    <property type="match status" value="1"/>
</dbReference>
<dbReference type="PANTHER" id="PTHR10217">
    <property type="entry name" value="VOLTAGE AND LIGAND GATED POTASSIUM CHANNEL"/>
    <property type="match status" value="1"/>
</dbReference>
<dbReference type="Pfam" id="PF00027">
    <property type="entry name" value="cNMP_binding"/>
    <property type="match status" value="1"/>
</dbReference>
<dbReference type="Pfam" id="PF00520">
    <property type="entry name" value="Ion_trans"/>
    <property type="match status" value="1"/>
</dbReference>
<dbReference type="Pfam" id="PF13426">
    <property type="entry name" value="PAS_9"/>
    <property type="match status" value="1"/>
</dbReference>
<dbReference type="PRINTS" id="PR01463">
    <property type="entry name" value="EAGCHANLFMLY"/>
</dbReference>
<dbReference type="PRINTS" id="PR01464">
    <property type="entry name" value="EAGCHANNEL"/>
</dbReference>
<dbReference type="SMART" id="SM00100">
    <property type="entry name" value="cNMP"/>
    <property type="match status" value="1"/>
</dbReference>
<dbReference type="SMART" id="SM00086">
    <property type="entry name" value="PAC"/>
    <property type="match status" value="1"/>
</dbReference>
<dbReference type="SUPFAM" id="SSF51206">
    <property type="entry name" value="cAMP-binding domain-like"/>
    <property type="match status" value="1"/>
</dbReference>
<dbReference type="SUPFAM" id="SSF55785">
    <property type="entry name" value="PYP-like sensor domain (PAS domain)"/>
    <property type="match status" value="1"/>
</dbReference>
<dbReference type="SUPFAM" id="SSF81324">
    <property type="entry name" value="Voltage-gated potassium channels"/>
    <property type="match status" value="1"/>
</dbReference>
<dbReference type="PROSITE" id="PS50042">
    <property type="entry name" value="CNMP_BINDING_3"/>
    <property type="match status" value="1"/>
</dbReference>
<dbReference type="PROSITE" id="PS50113">
    <property type="entry name" value="PAC"/>
    <property type="match status" value="1"/>
</dbReference>
<dbReference type="PROSITE" id="PS50112">
    <property type="entry name" value="PAS"/>
    <property type="match status" value="1"/>
</dbReference>
<organism>
    <name type="scientific">Mus musculus</name>
    <name type="common">Mouse</name>
    <dbReference type="NCBI Taxonomy" id="10090"/>
    <lineage>
        <taxon>Eukaryota</taxon>
        <taxon>Metazoa</taxon>
        <taxon>Chordata</taxon>
        <taxon>Craniata</taxon>
        <taxon>Vertebrata</taxon>
        <taxon>Euteleostomi</taxon>
        <taxon>Mammalia</taxon>
        <taxon>Eutheria</taxon>
        <taxon>Euarchontoglires</taxon>
        <taxon>Glires</taxon>
        <taxon>Rodentia</taxon>
        <taxon>Myomorpha</taxon>
        <taxon>Muroidea</taxon>
        <taxon>Muridae</taxon>
        <taxon>Murinae</taxon>
        <taxon>Mus</taxon>
        <taxon>Mus</taxon>
    </lineage>
</organism>
<accession>Q60603</accession>
<accession>Q32MR6</accession>
<accession>Q3USQ9</accession>
<sequence length="989" mass="111282">MTMAGGRRGLVAPQNTFLENIVRRSNDTNFVLGNAQIVDWPIVYSNDGFCKLSGYHRAEVMQKSSACSFMYGELTDKDTVEKVRQTFENYEMNSFEILMYKKNRTPVWFFVKIAPIRNEQDKVVLFLCTFSDITAFKQPIEDDSCKGWGKFARLTRALTSSRGVLQQLAPSVQKGENVHKHSRLAEVLQLGSDILPQYKQEAPKTPPHIILHYCVFKTTWDWIILILTFYTAILVPYNVSFKTRQNNVAWLVVDSIVDVIFLVDIVLNFHTTFVGPAGEVISDPKLIRMNYLKTWFVIDLLSCLPYDVINAFENVDEVSAFMGDPGKIGFADQIPPPLEGRESQGISSLFSSLKVVRLLRLGRVARKLDHYIEYGAAVLVLLVCVFGLAAHWMACIWYSIGDYEIFDEDTKTIRNNSWLYQLALDIGTPYQFNGSGSGKWEGGPSKNSVYISSLYFTMTSLTSVGFGNIAPSTDIEKIFAVAIMMIGSLLYATIFGNVTTIFQQMYANTNRYHEMLNSVRDFLKLYQVPKGLSERVMDYIVSTWSMSRGIDTEKVLQICPKDMRADICVHLNRKVFKEHPAFRLASDGCLRALAMEFQTVHCAPGDLIYHAGESVDSLCFVVSGSLEVIQDDEVVAILGKGDVFGDVFWKEATLAQSCANVRALTYCDLHVIKRDALQKVLEFYTAFSHSFSRNLILTYNLRKRIVFRKISDVKREEEERMKRKNEAPLILPPDHPVRRLFQRFRQQKEARLAAERGGRDLDDLDVEKGNALTDHTSANHSLVKASVVTVRESPATPVSFQAATTSTVSDHAKLHAPGSECLGPKAVSCDPAKRKGWARFKDACGKGEDWNKVSKAESMETLPERTKAPGEATLKKTDSCDSGITKSDLRLDNVGETRSPQDRSPILAEVKHSFYPIPEQTLQATVLEVKYELKEDIKALNAKMTSIEKQLSEILRILMSRGSAQSPQETGEISRPQSPESDRDIFGAS</sequence>
<feature type="chain" id="PRO_0000053995" description="Voltage-gated delayed rectifier potassium channel KCNH1">
    <location>
        <begin position="1"/>
        <end position="989"/>
    </location>
</feature>
<feature type="topological domain" description="Cytoplasmic" evidence="2">
    <location>
        <begin position="1"/>
        <end position="220"/>
    </location>
</feature>
<feature type="transmembrane region" description="Helical; Name=Segment S1" evidence="2">
    <location>
        <begin position="221"/>
        <end position="241"/>
    </location>
</feature>
<feature type="topological domain" description="Extracellular" evidence="2">
    <location>
        <begin position="242"/>
        <end position="248"/>
    </location>
</feature>
<feature type="transmembrane region" description="Helical; Name=Segment S2" evidence="2">
    <location>
        <begin position="249"/>
        <end position="269"/>
    </location>
</feature>
<feature type="topological domain" description="Cytoplasmic" evidence="2">
    <location>
        <begin position="270"/>
        <end position="290"/>
    </location>
</feature>
<feature type="transmembrane region" description="Helical; Name=Segment S3" evidence="2">
    <location>
        <begin position="291"/>
        <end position="309"/>
    </location>
</feature>
<feature type="topological domain" description="Extracellular" evidence="2">
    <location>
        <begin position="310"/>
        <end position="345"/>
    </location>
</feature>
<feature type="transmembrane region" description="Helical; Voltage-sensor; Name=Segment S4" evidence="2">
    <location>
        <begin position="346"/>
        <end position="368"/>
    </location>
</feature>
<feature type="topological domain" description="Cytoplasmic" evidence="2">
    <location>
        <begin position="369"/>
        <end position="377"/>
    </location>
</feature>
<feature type="transmembrane region" description="Helical; Name=Segment S5" evidence="2">
    <location>
        <begin position="378"/>
        <end position="399"/>
    </location>
</feature>
<feature type="topological domain" description="Extracellular" evidence="2">
    <location>
        <begin position="400"/>
        <end position="448"/>
    </location>
</feature>
<feature type="intramembrane region" description="Pore-forming; Name=Segment H5" evidence="2">
    <location>
        <begin position="449"/>
        <end position="470"/>
    </location>
</feature>
<feature type="topological domain" description="Extracellular" evidence="2">
    <location>
        <begin position="471"/>
        <end position="477"/>
    </location>
</feature>
<feature type="transmembrane region" description="Helical; Name=Segment S6" evidence="2">
    <location>
        <begin position="478"/>
        <end position="498"/>
    </location>
</feature>
<feature type="topological domain" description="Cytoplasmic" evidence="2">
    <location>
        <begin position="499"/>
        <end position="989"/>
    </location>
</feature>
<feature type="domain" description="PAS" evidence="4">
    <location>
        <begin position="14"/>
        <end position="94"/>
    </location>
</feature>
<feature type="domain" description="PAC" evidence="5">
    <location>
        <begin position="93"/>
        <end position="145"/>
    </location>
</feature>
<feature type="region of interest" description="Required for phosphatidylinositol bisphosphate binding" evidence="1">
    <location>
        <begin position="151"/>
        <end position="162"/>
    </location>
</feature>
<feature type="region of interest" description="Calmodulin-binding" evidence="8 14">
    <location>
        <begin position="673"/>
        <end position="770"/>
    </location>
</feature>
<feature type="region of interest" description="Interaction with cyclic nucleotide-binding pocket" evidence="8">
    <location>
        <begin position="699"/>
        <end position="701"/>
    </location>
</feature>
<feature type="region of interest" description="Disordered" evidence="6">
    <location>
        <begin position="857"/>
        <end position="905"/>
    </location>
</feature>
<feature type="region of interest" description="CAD (involved in subunit assembly)" evidence="2">
    <location>
        <begin position="924"/>
        <end position="964"/>
    </location>
</feature>
<feature type="region of interest" description="Disordered" evidence="6">
    <location>
        <begin position="961"/>
        <end position="989"/>
    </location>
</feature>
<feature type="short sequence motif" description="Selectivity filter" evidence="2">
    <location>
        <begin position="463"/>
        <end position="468"/>
    </location>
</feature>
<feature type="compositionally biased region" description="Basic and acidic residues" evidence="6">
    <location>
        <begin position="857"/>
        <end position="879"/>
    </location>
</feature>
<feature type="compositionally biased region" description="Basic and acidic residues" evidence="6">
    <location>
        <begin position="887"/>
        <end position="901"/>
    </location>
</feature>
<feature type="compositionally biased region" description="Polar residues" evidence="6">
    <location>
        <begin position="962"/>
        <end position="979"/>
    </location>
</feature>
<feature type="compositionally biased region" description="Basic and acidic residues" evidence="6">
    <location>
        <begin position="980"/>
        <end position="989"/>
    </location>
</feature>
<feature type="modified residue" description="Phosphoserine" evidence="26">
    <location>
        <position position="974"/>
    </location>
</feature>
<feature type="modified residue" description="Phosphoserine" evidence="26">
    <location>
        <position position="978"/>
    </location>
</feature>
<feature type="modified residue" description="Phosphoserine" evidence="26">
    <location>
        <position position="981"/>
    </location>
</feature>
<feature type="glycosylation site" description="N-linked (GlcNAc...) asparagine" evidence="3">
    <location>
        <position position="415"/>
    </location>
</feature>
<feature type="glycosylation site" description="N-linked (GlcNAc...) asparagine" evidence="3">
    <location>
        <position position="433"/>
    </location>
</feature>
<feature type="mutagenesis site" description="Strongly shifts the voltage-dependent channel activation to more depolarized membrane potentials." evidence="12">
    <original>RR</original>
    <variation>AA</variation>
    <variation>EE</variation>
    <location>
        <begin position="7"/>
        <end position="8"/>
    </location>
</feature>
<feature type="mutagenesis site" description="Decreases the rate of channel opening. No effect; when associated with R-642." evidence="12">
    <original>R</original>
    <variation>D</variation>
    <location>
        <position position="57"/>
    </location>
</feature>
<feature type="mutagenesis site" description="Strongly shifts the voltage-dependent channel activation to much more depolarized membrane potentials." evidence="12">
    <original>E</original>
    <variation>A</variation>
    <variation>R</variation>
    <location>
        <position position="627"/>
    </location>
</feature>
<feature type="mutagenesis site" description="Mildly increases the affinity for CALM." evidence="8">
    <original>V</original>
    <variation>A</variation>
    <variation>L</variation>
    <location>
        <position position="628"/>
    </location>
</feature>
<feature type="mutagenesis site" description="Decreases the rate of channel opening. No effect; when associated with D-57." evidence="12">
    <original>D</original>
    <variation>R</variation>
    <location>
        <position position="642"/>
    </location>
</feature>
<feature type="mutagenesis site" description="Increases the affinity for CALM." evidence="8">
    <original>LTY</original>
    <variation>ATA</variation>
    <location>
        <begin position="697"/>
        <end position="699"/>
    </location>
</feature>
<feature type="mutagenesis site" description="Increases the affinity for CALM." evidence="8">
    <original>YNL</original>
    <variation>ANA</variation>
    <location>
        <begin position="699"/>
        <end position="701"/>
    </location>
</feature>
<feature type="mutagenesis site" description="Mildly increases the affinity for CALM." evidence="8">
    <original>Y</original>
    <variation>W</variation>
    <location>
        <position position="699"/>
    </location>
</feature>
<feature type="mutagenesis site" description="Decreases the affinity for CALM." evidence="8">
    <original>IVF</original>
    <variation>AAA</variation>
    <location>
        <begin position="705"/>
        <end position="707"/>
    </location>
</feature>
<feature type="mutagenesis site" description="No effect on affinity for CALM; when associated with A-740." evidence="14">
    <original>V</original>
    <variation>A</variation>
    <location>
        <position position="737"/>
    </location>
</feature>
<feature type="mutagenesis site" description="Decreases affinity for CALM 230-fold; when associated with S-740." evidence="14">
    <original>V</original>
    <variation>S</variation>
    <location>
        <position position="737"/>
    </location>
</feature>
<feature type="mutagenesis site" description="No effect on affinity for CALM; when associated with A-737." evidence="14">
    <original>L</original>
    <variation>A</variation>
    <location>
        <position position="740"/>
    </location>
</feature>
<feature type="mutagenesis site" description="Decreases affinity for CALM 230-fold; when associated with S-737." evidence="14">
    <original>L</original>
    <variation>S</variation>
    <location>
        <position position="740"/>
    </location>
</feature>
<feature type="mutagenesis site" description="Decreases affinity for CALM about 30-fold." evidence="14">
    <original>F</original>
    <variation>S</variation>
    <location>
        <position position="741"/>
    </location>
</feature>
<feature type="sequence conflict" description="In Ref. 1; AAA62474 and 2; BAE24272." ref="1 2">
    <original>V</original>
    <variation>M</variation>
    <location>
        <position position="808"/>
    </location>
</feature>
<feature type="helix" evidence="28">
    <location>
        <begin position="17"/>
        <end position="22"/>
    </location>
</feature>
<feature type="strand" evidence="27">
    <location>
        <begin position="29"/>
        <end position="34"/>
    </location>
</feature>
<feature type="strand" evidence="27">
    <location>
        <begin position="41"/>
        <end position="45"/>
    </location>
</feature>
<feature type="helix" evidence="27">
    <location>
        <begin position="47"/>
        <end position="53"/>
    </location>
</feature>
<feature type="helix" evidence="27">
    <location>
        <begin position="57"/>
        <end position="60"/>
    </location>
</feature>
<feature type="helix" evidence="27">
    <location>
        <begin position="68"/>
        <end position="70"/>
    </location>
</feature>
<feature type="helix" evidence="27">
    <location>
        <begin position="77"/>
        <end position="88"/>
    </location>
</feature>
<feature type="strand" evidence="27">
    <location>
        <begin position="93"/>
        <end position="100"/>
    </location>
</feature>
<feature type="strand" evidence="27">
    <location>
        <begin position="106"/>
        <end position="117"/>
    </location>
</feature>
<feature type="strand" evidence="27">
    <location>
        <begin position="123"/>
        <end position="132"/>
    </location>
</feature>
<feature type="turn" evidence="27">
    <location>
        <begin position="134"/>
        <end position="136"/>
    </location>
</feature>
<feature type="strand" evidence="28">
    <location>
        <begin position="555"/>
        <end position="559"/>
    </location>
</feature>
<feature type="helix" evidence="28">
    <location>
        <begin position="565"/>
        <end position="571"/>
    </location>
</feature>
<feature type="helix" evidence="28">
    <location>
        <begin position="573"/>
        <end position="576"/>
    </location>
</feature>
<feature type="helix" evidence="28">
    <location>
        <begin position="580"/>
        <end position="582"/>
    </location>
</feature>
<feature type="helix" evidence="28">
    <location>
        <begin position="587"/>
        <end position="596"/>
    </location>
</feature>
<feature type="strand" evidence="28">
    <location>
        <begin position="598"/>
        <end position="602"/>
    </location>
</feature>
<feature type="strand" evidence="28">
    <location>
        <begin position="607"/>
        <end position="609"/>
    </location>
</feature>
<feature type="strand" evidence="28">
    <location>
        <begin position="613"/>
        <end position="615"/>
    </location>
</feature>
<feature type="strand" evidence="28">
    <location>
        <begin position="617"/>
        <end position="624"/>
    </location>
</feature>
<feature type="strand" evidence="28">
    <location>
        <begin position="626"/>
        <end position="630"/>
    </location>
</feature>
<feature type="strand" evidence="28">
    <location>
        <begin position="633"/>
        <end position="638"/>
    </location>
</feature>
<feature type="strand" evidence="28">
    <location>
        <begin position="643"/>
        <end position="645"/>
    </location>
</feature>
<feature type="turn" evidence="28">
    <location>
        <begin position="647"/>
        <end position="651"/>
    </location>
</feature>
<feature type="strand" evidence="28">
    <location>
        <begin position="658"/>
        <end position="673"/>
    </location>
</feature>
<feature type="helix" evidence="28">
    <location>
        <begin position="674"/>
        <end position="683"/>
    </location>
</feature>
<feature type="helix" evidence="28">
    <location>
        <begin position="685"/>
        <end position="694"/>
    </location>
</feature>
<feature type="strand" evidence="28">
    <location>
        <begin position="698"/>
        <end position="700"/>
    </location>
</feature>
<feature type="helix" evidence="28">
    <location>
        <begin position="710"/>
        <end position="718"/>
    </location>
</feature>
<feature type="helix" evidence="29">
    <location>
        <begin position="736"/>
        <end position="741"/>
    </location>
</feature>
<name>KCNH1_MOUSE</name>
<evidence type="ECO:0000250" key="1">
    <source>
        <dbReference type="UniProtKB" id="O95259"/>
    </source>
</evidence>
<evidence type="ECO:0000250" key="2">
    <source>
        <dbReference type="UniProtKB" id="Q63472"/>
    </source>
</evidence>
<evidence type="ECO:0000255" key="3"/>
<evidence type="ECO:0000255" key="4">
    <source>
        <dbReference type="PROSITE-ProRule" id="PRU00140"/>
    </source>
</evidence>
<evidence type="ECO:0000255" key="5">
    <source>
        <dbReference type="PROSITE-ProRule" id="PRU00141"/>
    </source>
</evidence>
<evidence type="ECO:0000256" key="6">
    <source>
        <dbReference type="SAM" id="MobiDB-lite"/>
    </source>
</evidence>
<evidence type="ECO:0000269" key="7">
    <source>
    </source>
</evidence>
<evidence type="ECO:0000269" key="8">
    <source>
    </source>
</evidence>
<evidence type="ECO:0000269" key="9">
    <source>
    </source>
</evidence>
<evidence type="ECO:0000269" key="10">
    <source>
    </source>
</evidence>
<evidence type="ECO:0000269" key="11">
    <source>
    </source>
</evidence>
<evidence type="ECO:0000269" key="12">
    <source>
    </source>
</evidence>
<evidence type="ECO:0000269" key="13">
    <source>
    </source>
</evidence>
<evidence type="ECO:0000269" key="14">
    <source>
    </source>
</evidence>
<evidence type="ECO:0000303" key="15">
    <source>
    </source>
</evidence>
<evidence type="ECO:0000303" key="16">
    <source>
    </source>
</evidence>
<evidence type="ECO:0000305" key="17"/>
<evidence type="ECO:0000305" key="18">
    <source>
    </source>
</evidence>
<evidence type="ECO:0000305" key="19">
    <source>
    </source>
</evidence>
<evidence type="ECO:0000312" key="20">
    <source>
        <dbReference type="EMBL" id="BAE24272.1"/>
    </source>
</evidence>
<evidence type="ECO:0000312" key="21">
    <source>
        <dbReference type="MGI" id="MGI:1341721"/>
    </source>
</evidence>
<evidence type="ECO:0007744" key="22">
    <source>
        <dbReference type="PDB" id="4F8A"/>
    </source>
</evidence>
<evidence type="ECO:0007744" key="23">
    <source>
        <dbReference type="PDB" id="4HOI"/>
    </source>
</evidence>
<evidence type="ECO:0007744" key="24">
    <source>
        <dbReference type="PDB" id="4LLO"/>
    </source>
</evidence>
<evidence type="ECO:0007744" key="25">
    <source>
        <dbReference type="PDB" id="5HIT"/>
    </source>
</evidence>
<evidence type="ECO:0007744" key="26">
    <source>
    </source>
</evidence>
<evidence type="ECO:0007829" key="27">
    <source>
        <dbReference type="PDB" id="4HOI"/>
    </source>
</evidence>
<evidence type="ECO:0007829" key="28">
    <source>
        <dbReference type="PDB" id="4LLO"/>
    </source>
</evidence>
<evidence type="ECO:0007829" key="29">
    <source>
        <dbReference type="PDB" id="5HIT"/>
    </source>
</evidence>